<name>YBEY_BACC2</name>
<protein>
    <recommendedName>
        <fullName evidence="1">Endoribonuclease YbeY</fullName>
        <ecNumber evidence="1">3.1.-.-</ecNumber>
    </recommendedName>
</protein>
<proteinExistence type="inferred from homology"/>
<sequence length="156" mass="18025">MSLLIDFIDETEEVKEAYMSLIREVLEKAAQMENIEDGAEVSVTFVDNERIREINRDYRDKDQPTDVISFAMEEMGEGEMEIVGAEMPRMLGDLIISIPRAKEQAEEYGHSFDRELGFLALHGFLHLLGYDHMTEEEEKEMFGRQKEILEAFGLGR</sequence>
<evidence type="ECO:0000255" key="1">
    <source>
        <dbReference type="HAMAP-Rule" id="MF_00009"/>
    </source>
</evidence>
<keyword id="KW-0963">Cytoplasm</keyword>
<keyword id="KW-0255">Endonuclease</keyword>
<keyword id="KW-0378">Hydrolase</keyword>
<keyword id="KW-0479">Metal-binding</keyword>
<keyword id="KW-0540">Nuclease</keyword>
<keyword id="KW-0690">Ribosome biogenesis</keyword>
<keyword id="KW-0698">rRNA processing</keyword>
<keyword id="KW-0862">Zinc</keyword>
<organism>
    <name type="scientific">Bacillus cereus (strain G9842)</name>
    <dbReference type="NCBI Taxonomy" id="405531"/>
    <lineage>
        <taxon>Bacteria</taxon>
        <taxon>Bacillati</taxon>
        <taxon>Bacillota</taxon>
        <taxon>Bacilli</taxon>
        <taxon>Bacillales</taxon>
        <taxon>Bacillaceae</taxon>
        <taxon>Bacillus</taxon>
        <taxon>Bacillus cereus group</taxon>
    </lineage>
</organism>
<reference key="1">
    <citation type="submission" date="2008-10" db="EMBL/GenBank/DDBJ databases">
        <title>Genome sequence of Bacillus cereus G9842.</title>
        <authorList>
            <person name="Dodson R.J."/>
            <person name="Durkin A.S."/>
            <person name="Rosovitz M.J."/>
            <person name="Rasko D.A."/>
            <person name="Hoffmaster A."/>
            <person name="Ravel J."/>
            <person name="Sutton G."/>
        </authorList>
    </citation>
    <scope>NUCLEOTIDE SEQUENCE [LARGE SCALE GENOMIC DNA]</scope>
    <source>
        <strain>G9842</strain>
    </source>
</reference>
<accession>B7IYF4</accession>
<gene>
    <name evidence="1" type="primary">ybeY</name>
    <name type="ordered locus">BCG9842_B0816</name>
</gene>
<dbReference type="EC" id="3.1.-.-" evidence="1"/>
<dbReference type="EMBL" id="CP001186">
    <property type="protein sequence ID" value="ACK94651.1"/>
    <property type="molecule type" value="Genomic_DNA"/>
</dbReference>
<dbReference type="RefSeq" id="WP_000054680.1">
    <property type="nucleotide sequence ID" value="NC_011772.1"/>
</dbReference>
<dbReference type="SMR" id="B7IYF4"/>
<dbReference type="KEGG" id="bcg:BCG9842_B0816"/>
<dbReference type="HOGENOM" id="CLU_106710_3_0_9"/>
<dbReference type="Proteomes" id="UP000006744">
    <property type="component" value="Chromosome"/>
</dbReference>
<dbReference type="GO" id="GO:0005737">
    <property type="term" value="C:cytoplasm"/>
    <property type="evidence" value="ECO:0007669"/>
    <property type="project" value="UniProtKB-SubCell"/>
</dbReference>
<dbReference type="GO" id="GO:0004222">
    <property type="term" value="F:metalloendopeptidase activity"/>
    <property type="evidence" value="ECO:0007669"/>
    <property type="project" value="InterPro"/>
</dbReference>
<dbReference type="GO" id="GO:0004521">
    <property type="term" value="F:RNA endonuclease activity"/>
    <property type="evidence" value="ECO:0007669"/>
    <property type="project" value="UniProtKB-UniRule"/>
</dbReference>
<dbReference type="GO" id="GO:0008270">
    <property type="term" value="F:zinc ion binding"/>
    <property type="evidence" value="ECO:0007669"/>
    <property type="project" value="UniProtKB-UniRule"/>
</dbReference>
<dbReference type="GO" id="GO:0006364">
    <property type="term" value="P:rRNA processing"/>
    <property type="evidence" value="ECO:0007669"/>
    <property type="project" value="UniProtKB-UniRule"/>
</dbReference>
<dbReference type="Gene3D" id="3.40.390.30">
    <property type="entry name" value="Metalloproteases ('zincins'), catalytic domain"/>
    <property type="match status" value="1"/>
</dbReference>
<dbReference type="HAMAP" id="MF_00009">
    <property type="entry name" value="Endoribonucl_YbeY"/>
    <property type="match status" value="1"/>
</dbReference>
<dbReference type="InterPro" id="IPR023091">
    <property type="entry name" value="MetalPrtase_cat_dom_sf_prd"/>
</dbReference>
<dbReference type="InterPro" id="IPR002036">
    <property type="entry name" value="YbeY"/>
</dbReference>
<dbReference type="InterPro" id="IPR020549">
    <property type="entry name" value="YbeY_CS"/>
</dbReference>
<dbReference type="NCBIfam" id="TIGR00043">
    <property type="entry name" value="rRNA maturation RNase YbeY"/>
    <property type="match status" value="1"/>
</dbReference>
<dbReference type="PANTHER" id="PTHR46986">
    <property type="entry name" value="ENDORIBONUCLEASE YBEY, CHLOROPLASTIC"/>
    <property type="match status" value="1"/>
</dbReference>
<dbReference type="PANTHER" id="PTHR46986:SF1">
    <property type="entry name" value="ENDORIBONUCLEASE YBEY, CHLOROPLASTIC"/>
    <property type="match status" value="1"/>
</dbReference>
<dbReference type="Pfam" id="PF02130">
    <property type="entry name" value="YbeY"/>
    <property type="match status" value="1"/>
</dbReference>
<dbReference type="SUPFAM" id="SSF55486">
    <property type="entry name" value="Metalloproteases ('zincins'), catalytic domain"/>
    <property type="match status" value="1"/>
</dbReference>
<dbReference type="PROSITE" id="PS01306">
    <property type="entry name" value="UPF0054"/>
    <property type="match status" value="1"/>
</dbReference>
<comment type="function">
    <text evidence="1">Single strand-specific metallo-endoribonuclease involved in late-stage 70S ribosome quality control and in maturation of the 3' terminus of the 16S rRNA.</text>
</comment>
<comment type="cofactor">
    <cofactor evidence="1">
        <name>Zn(2+)</name>
        <dbReference type="ChEBI" id="CHEBI:29105"/>
    </cofactor>
    <text evidence="1">Binds 1 zinc ion.</text>
</comment>
<comment type="subcellular location">
    <subcellularLocation>
        <location evidence="1">Cytoplasm</location>
    </subcellularLocation>
</comment>
<comment type="similarity">
    <text evidence="1">Belongs to the endoribonuclease YbeY family.</text>
</comment>
<feature type="chain" id="PRO_1000199952" description="Endoribonuclease YbeY">
    <location>
        <begin position="1"/>
        <end position="156"/>
    </location>
</feature>
<feature type="binding site" evidence="1">
    <location>
        <position position="122"/>
    </location>
    <ligand>
        <name>Zn(2+)</name>
        <dbReference type="ChEBI" id="CHEBI:29105"/>
        <note>catalytic</note>
    </ligand>
</feature>
<feature type="binding site" evidence="1">
    <location>
        <position position="126"/>
    </location>
    <ligand>
        <name>Zn(2+)</name>
        <dbReference type="ChEBI" id="CHEBI:29105"/>
        <note>catalytic</note>
    </ligand>
</feature>
<feature type="binding site" evidence="1">
    <location>
        <position position="132"/>
    </location>
    <ligand>
        <name>Zn(2+)</name>
        <dbReference type="ChEBI" id="CHEBI:29105"/>
        <note>catalytic</note>
    </ligand>
</feature>